<accession>Q3L890</accession>
<accession>A0QPH8</accession>
<protein>
    <recommendedName>
        <fullName evidence="4">Peptidoglycolipid exporter Gap</fullName>
    </recommendedName>
    <alternativeName>
        <fullName evidence="3">GPLs addressing protein</fullName>
    </alternativeName>
</protein>
<sequence>MWSDILGLALFVSLNPLLLGFILLVLSRPRPVPNLVVFWVGCLIVNVPGFLIPLFVLRAVPSFAEFAEDLTTADPSSGIEPFQLGTGIFALAVSAVIALRMWVKRRANQPVLVGSGAGDRGPTDDASTLVLDSGAREAREPGAIARMILRMRSALQRLVSRLHQEWENGALWVALVFGLAYIPPPPLVLLVDTIIGGSGAPIGTQIIAVFVFIMAMLAVFEITLLSYVIAPRRTQAVLEPLHEWSHRHRQMILLVLFGAVGIWELIVGLGVI</sequence>
<keyword id="KW-0997">Cell inner membrane</keyword>
<keyword id="KW-1003">Cell membrane</keyword>
<keyword id="KW-0445">Lipid transport</keyword>
<keyword id="KW-0472">Membrane</keyword>
<keyword id="KW-1185">Reference proteome</keyword>
<keyword id="KW-0812">Transmembrane</keyword>
<keyword id="KW-1133">Transmembrane helix</keyword>
<keyword id="KW-0813">Transport</keyword>
<dbReference type="EMBL" id="AY439015">
    <property type="protein sequence ID" value="AAT01808.1"/>
    <property type="molecule type" value="Genomic_DNA"/>
</dbReference>
<dbReference type="EMBL" id="CP000480">
    <property type="protein sequence ID" value="ABK71066.1"/>
    <property type="molecule type" value="Genomic_DNA"/>
</dbReference>
<dbReference type="EMBL" id="CP001663">
    <property type="protein sequence ID" value="AFP36874.1"/>
    <property type="molecule type" value="Genomic_DNA"/>
</dbReference>
<dbReference type="EMBL" id="CP009494">
    <property type="protein sequence ID" value="AIU05677.1"/>
    <property type="molecule type" value="Genomic_DNA"/>
</dbReference>
<dbReference type="RefSeq" id="WP_011726918.1">
    <property type="nucleotide sequence ID" value="NZ_SIJM01000040.1"/>
</dbReference>
<dbReference type="RefSeq" id="YP_884816.1">
    <property type="nucleotide sequence ID" value="NC_008596.1"/>
</dbReference>
<dbReference type="STRING" id="246196.MSMEG_0403"/>
<dbReference type="TCDB" id="2.A.116.1.1">
    <property type="family name" value="the peptidoglycolipid addressing protein (gap) family"/>
</dbReference>
<dbReference type="PaxDb" id="246196-MSMEI_0393"/>
<dbReference type="KEGG" id="msb:LJ00_02005"/>
<dbReference type="KEGG" id="msg:MSMEI_0393"/>
<dbReference type="KEGG" id="msm:MSMEG_0403"/>
<dbReference type="PATRIC" id="fig|246196.19.peg.399"/>
<dbReference type="eggNOG" id="ENOG5031F2T">
    <property type="taxonomic scope" value="Bacteria"/>
</dbReference>
<dbReference type="HOGENOM" id="CLU_068662_1_0_11"/>
<dbReference type="OrthoDB" id="4627516at2"/>
<dbReference type="Proteomes" id="UP000000757">
    <property type="component" value="Chromosome"/>
</dbReference>
<dbReference type="Proteomes" id="UP000006158">
    <property type="component" value="Chromosome"/>
</dbReference>
<dbReference type="GO" id="GO:0005886">
    <property type="term" value="C:plasma membrane"/>
    <property type="evidence" value="ECO:0007669"/>
    <property type="project" value="UniProtKB-SubCell"/>
</dbReference>
<dbReference type="GO" id="GO:0006869">
    <property type="term" value="P:lipid transport"/>
    <property type="evidence" value="ECO:0007669"/>
    <property type="project" value="UniProtKB-KW"/>
</dbReference>
<dbReference type="InterPro" id="IPR021315">
    <property type="entry name" value="Gap/Sap"/>
</dbReference>
<dbReference type="Pfam" id="PF11139">
    <property type="entry name" value="SfLAP"/>
    <property type="match status" value="1"/>
</dbReference>
<comment type="function">
    <text evidence="2">Required for the transport of peptidoglycolipids (GPLs) to the cell surface.</text>
</comment>
<comment type="subcellular location">
    <subcellularLocation>
        <location evidence="5">Cell inner membrane</location>
        <topology evidence="1">Multi-pass membrane protein</topology>
    </subcellularLocation>
</comment>
<comment type="disruption phenotype">
    <text evidence="2">Deletion mutant synthesizes GPL at a level similar to the wild-type strain, but is unable to transport it to the cell surface. GPLs are retained within the cytoplasmic compartment. Mutant is not able to slide.</text>
</comment>
<comment type="similarity">
    <text evidence="4">Belongs to the peptidoglycolipid addressing protein (GAP) (TC 2.A.116) family.</text>
</comment>
<reference key="1">
    <citation type="journal article" date="2005" name="Mol. Microbiol.">
        <title>Gap, a mycobacterial specific integral membrane protein, is required for glycolipid transport to the cell surface.</title>
        <authorList>
            <person name="Sonden B."/>
            <person name="Kocincova D."/>
            <person name="Deshayes C."/>
            <person name="Euphrasie D."/>
            <person name="Rhayat L."/>
            <person name="Laval F."/>
            <person name="Frehel C."/>
            <person name="Daffe M."/>
            <person name="Etienne G."/>
            <person name="Reyrat J.M."/>
        </authorList>
    </citation>
    <scope>NUCLEOTIDE SEQUENCE [GENOMIC DNA]</scope>
    <scope>FUNCTION IN TRANSPORT</scope>
    <scope>SUBCELLULAR LOCATION</scope>
    <scope>DISRUPTION PHENOTYPE</scope>
    <source>
        <strain>ATCC 700084 / mc(2)155</strain>
    </source>
</reference>
<reference key="2">
    <citation type="submission" date="2006-10" db="EMBL/GenBank/DDBJ databases">
        <authorList>
            <person name="Fleischmann R.D."/>
            <person name="Dodson R.J."/>
            <person name="Haft D.H."/>
            <person name="Merkel J.S."/>
            <person name="Nelson W.C."/>
            <person name="Fraser C.M."/>
        </authorList>
    </citation>
    <scope>NUCLEOTIDE SEQUENCE [LARGE SCALE GENOMIC DNA]</scope>
    <source>
        <strain>ATCC 700084 / mc(2)155</strain>
    </source>
</reference>
<reference key="3">
    <citation type="journal article" date="2007" name="Genome Biol.">
        <title>Interrupted coding sequences in Mycobacterium smegmatis: authentic mutations or sequencing errors?</title>
        <authorList>
            <person name="Deshayes C."/>
            <person name="Perrodou E."/>
            <person name="Gallien S."/>
            <person name="Euphrasie D."/>
            <person name="Schaeffer C."/>
            <person name="Van-Dorsselaer A."/>
            <person name="Poch O."/>
            <person name="Lecompte O."/>
            <person name="Reyrat J.-M."/>
        </authorList>
    </citation>
    <scope>NUCLEOTIDE SEQUENCE [LARGE SCALE GENOMIC DNA]</scope>
    <source>
        <strain>ATCC 700084 / mc(2)155</strain>
    </source>
</reference>
<reference key="4">
    <citation type="journal article" date="2009" name="Genome Res.">
        <title>Ortho-proteogenomics: multiple proteomes investigation through orthology and a new MS-based protocol.</title>
        <authorList>
            <person name="Gallien S."/>
            <person name="Perrodou E."/>
            <person name="Carapito C."/>
            <person name="Deshayes C."/>
            <person name="Reyrat J.-M."/>
            <person name="Van Dorsselaer A."/>
            <person name="Poch O."/>
            <person name="Schaeffer C."/>
            <person name="Lecompte O."/>
        </authorList>
    </citation>
    <scope>NUCLEOTIDE SEQUENCE [LARGE SCALE GENOMIC DNA]</scope>
    <source>
        <strain>ATCC 700084 / mc(2)155</strain>
    </source>
</reference>
<reference key="5">
    <citation type="journal article" date="2015" name="Genome Announc.">
        <title>Complete genome sequences of a Mycobacterium smegmatis laboratory strain (MC2 155) and isoniazid-resistant (4XR1/R2) mutant strains.</title>
        <authorList>
            <person name="Mohan A."/>
            <person name="Padiadpu J."/>
            <person name="Baloni P."/>
            <person name="Chandra N."/>
        </authorList>
    </citation>
    <scope>NUCLEOTIDE SEQUENCE [LARGE SCALE GENOMIC DNA]</scope>
    <source>
        <strain>ATCC 700084 / mc(2)155</strain>
    </source>
</reference>
<proteinExistence type="evidence at protein level"/>
<feature type="chain" id="PRO_0000432807" description="Peptidoglycolipid exporter Gap">
    <location>
        <begin position="1"/>
        <end position="272"/>
    </location>
</feature>
<feature type="transmembrane region" description="Helical" evidence="1">
    <location>
        <begin position="5"/>
        <end position="25"/>
    </location>
</feature>
<feature type="transmembrane region" description="Helical" evidence="1">
    <location>
        <begin position="36"/>
        <end position="56"/>
    </location>
</feature>
<feature type="transmembrane region" description="Helical" evidence="1">
    <location>
        <begin position="79"/>
        <end position="99"/>
    </location>
</feature>
<feature type="transmembrane region" description="Helical" evidence="1">
    <location>
        <begin position="171"/>
        <end position="191"/>
    </location>
</feature>
<feature type="transmembrane region" description="Helical" evidence="1">
    <location>
        <begin position="206"/>
        <end position="226"/>
    </location>
</feature>
<feature type="transmembrane region" description="Helical" evidence="1">
    <location>
        <begin position="252"/>
        <end position="272"/>
    </location>
</feature>
<organism>
    <name type="scientific">Mycolicibacterium smegmatis (strain ATCC 700084 / mc(2)155)</name>
    <name type="common">Mycobacterium smegmatis</name>
    <dbReference type="NCBI Taxonomy" id="246196"/>
    <lineage>
        <taxon>Bacteria</taxon>
        <taxon>Bacillati</taxon>
        <taxon>Actinomycetota</taxon>
        <taxon>Actinomycetes</taxon>
        <taxon>Mycobacteriales</taxon>
        <taxon>Mycobacteriaceae</taxon>
        <taxon>Mycolicibacterium</taxon>
    </lineage>
</organism>
<gene>
    <name evidence="3" type="primary">gap</name>
    <name evidence="6" type="ordered locus">MSMEG_0403</name>
    <name evidence="7" type="ordered locus">MSMEI_0393</name>
    <name evidence="8" type="ORF">LJ00_02005</name>
</gene>
<evidence type="ECO:0000255" key="1"/>
<evidence type="ECO:0000269" key="2">
    <source>
    </source>
</evidence>
<evidence type="ECO:0000303" key="3">
    <source>
    </source>
</evidence>
<evidence type="ECO:0000305" key="4"/>
<evidence type="ECO:0000305" key="5">
    <source>
    </source>
</evidence>
<evidence type="ECO:0000312" key="6">
    <source>
        <dbReference type="EMBL" id="ABK71066.1"/>
    </source>
</evidence>
<evidence type="ECO:0000312" key="7">
    <source>
        <dbReference type="EMBL" id="AFP36874.1"/>
    </source>
</evidence>
<evidence type="ECO:0000312" key="8">
    <source>
        <dbReference type="EMBL" id="AIU05677.1"/>
    </source>
</evidence>
<name>GAP_MYCS2</name>